<comment type="catalytic activity">
    <reaction evidence="1">
        <text>a CDP-1,2-diacyl-sn-glycerol + H2O = a 1,2-diacyl-sn-glycero-3-phosphate + CMP + 2 H(+)</text>
        <dbReference type="Rhea" id="RHEA:15221"/>
        <dbReference type="ChEBI" id="CHEBI:15377"/>
        <dbReference type="ChEBI" id="CHEBI:15378"/>
        <dbReference type="ChEBI" id="CHEBI:58332"/>
        <dbReference type="ChEBI" id="CHEBI:58608"/>
        <dbReference type="ChEBI" id="CHEBI:60377"/>
        <dbReference type="EC" id="3.6.1.26"/>
    </reaction>
</comment>
<comment type="pathway">
    <text evidence="1">Phospholipid metabolism; CDP-diacylglycerol degradation; phosphatidate from CDP-diacylglycerol: step 1/1.</text>
</comment>
<comment type="subcellular location">
    <subcellularLocation>
        <location evidence="1">Cell inner membrane</location>
        <topology evidence="1">Single-pass membrane protein</topology>
    </subcellularLocation>
</comment>
<comment type="similarity">
    <text evidence="1">Belongs to the Cdh family.</text>
</comment>
<proteinExistence type="inferred from homology"/>
<dbReference type="EC" id="3.6.1.26" evidence="1"/>
<dbReference type="EMBL" id="CP000653">
    <property type="protein sequence ID" value="ABP62709.1"/>
    <property type="molecule type" value="Genomic_DNA"/>
</dbReference>
<dbReference type="RefSeq" id="WP_015961013.1">
    <property type="nucleotide sequence ID" value="NC_009436.1"/>
</dbReference>
<dbReference type="SMR" id="A4WG79"/>
<dbReference type="STRING" id="399742.Ent638_4054"/>
<dbReference type="KEGG" id="ent:Ent638_4054"/>
<dbReference type="eggNOG" id="COG2134">
    <property type="taxonomic scope" value="Bacteria"/>
</dbReference>
<dbReference type="HOGENOM" id="CLU_077117_0_0_6"/>
<dbReference type="OrthoDB" id="481399at2"/>
<dbReference type="UniPathway" id="UPA00609">
    <property type="reaction ID" value="UER00664"/>
</dbReference>
<dbReference type="Proteomes" id="UP000000230">
    <property type="component" value="Chromosome"/>
</dbReference>
<dbReference type="GO" id="GO:0005886">
    <property type="term" value="C:plasma membrane"/>
    <property type="evidence" value="ECO:0007669"/>
    <property type="project" value="UniProtKB-SubCell"/>
</dbReference>
<dbReference type="GO" id="GO:0008715">
    <property type="term" value="F:CDP-diacylglycerol diphosphatase activity"/>
    <property type="evidence" value="ECO:0007669"/>
    <property type="project" value="UniProtKB-UniRule"/>
</dbReference>
<dbReference type="GO" id="GO:0046342">
    <property type="term" value="P:CDP-diacylglycerol catabolic process"/>
    <property type="evidence" value="ECO:0007669"/>
    <property type="project" value="UniProtKB-UniRule"/>
</dbReference>
<dbReference type="GO" id="GO:0008654">
    <property type="term" value="P:phospholipid biosynthetic process"/>
    <property type="evidence" value="ECO:0007669"/>
    <property type="project" value="UniProtKB-KW"/>
</dbReference>
<dbReference type="Gene3D" id="3.30.428.30">
    <property type="entry name" value="HIT family - CDH-like"/>
    <property type="match status" value="1"/>
</dbReference>
<dbReference type="HAMAP" id="MF_00319">
    <property type="entry name" value="Cdh"/>
    <property type="match status" value="1"/>
</dbReference>
<dbReference type="InterPro" id="IPR003763">
    <property type="entry name" value="CDP-diacylglyc_Pase"/>
</dbReference>
<dbReference type="InterPro" id="IPR015993">
    <property type="entry name" value="CDP-diacylglyc_Pase_proteobac"/>
</dbReference>
<dbReference type="InterPro" id="IPR036265">
    <property type="entry name" value="HIT-like_sf"/>
</dbReference>
<dbReference type="NCBIfam" id="TIGR00672">
    <property type="entry name" value="cdh"/>
    <property type="match status" value="1"/>
</dbReference>
<dbReference type="NCBIfam" id="NF003986">
    <property type="entry name" value="PRK05471.1-5"/>
    <property type="match status" value="1"/>
</dbReference>
<dbReference type="NCBIfam" id="NF003987">
    <property type="entry name" value="PRK05471.1-6"/>
    <property type="match status" value="1"/>
</dbReference>
<dbReference type="Pfam" id="PF02611">
    <property type="entry name" value="CDH"/>
    <property type="match status" value="1"/>
</dbReference>
<dbReference type="PIRSF" id="PIRSF001273">
    <property type="entry name" value="CDH"/>
    <property type="match status" value="1"/>
</dbReference>
<dbReference type="SUPFAM" id="SSF54197">
    <property type="entry name" value="HIT-like"/>
    <property type="match status" value="1"/>
</dbReference>
<feature type="chain" id="PRO_1000059465" description="CDP-diacylglycerol pyrophosphatase">
    <location>
        <begin position="1"/>
        <end position="247"/>
    </location>
</feature>
<feature type="transmembrane region" description="Helical" evidence="1">
    <location>
        <begin position="5"/>
        <end position="22"/>
    </location>
</feature>
<organism>
    <name type="scientific">Enterobacter sp. (strain 638)</name>
    <dbReference type="NCBI Taxonomy" id="399742"/>
    <lineage>
        <taxon>Bacteria</taxon>
        <taxon>Pseudomonadati</taxon>
        <taxon>Pseudomonadota</taxon>
        <taxon>Gammaproteobacteria</taxon>
        <taxon>Enterobacterales</taxon>
        <taxon>Enterobacteriaceae</taxon>
        <taxon>Enterobacter</taxon>
    </lineage>
</organism>
<protein>
    <recommendedName>
        <fullName evidence="1">CDP-diacylglycerol pyrophosphatase</fullName>
        <ecNumber evidence="1">3.6.1.26</ecNumber>
    </recommendedName>
    <alternativeName>
        <fullName evidence="1">CDP-diacylglycerol phosphatidylhydrolase</fullName>
    </alternativeName>
    <alternativeName>
        <fullName evidence="1">CDP-diglyceride hydrolase</fullName>
    </alternativeName>
</protein>
<evidence type="ECO:0000255" key="1">
    <source>
        <dbReference type="HAMAP-Rule" id="MF_00319"/>
    </source>
</evidence>
<name>CDH_ENT38</name>
<gene>
    <name evidence="1" type="primary">cdh</name>
    <name type="ordered locus">Ent638_4054</name>
</gene>
<reference key="1">
    <citation type="journal article" date="2010" name="PLoS Genet.">
        <title>Genome sequence of the plant growth promoting endophytic bacterium Enterobacter sp. 638.</title>
        <authorList>
            <person name="Taghavi S."/>
            <person name="van der Lelie D."/>
            <person name="Hoffman A."/>
            <person name="Zhang Y.B."/>
            <person name="Walla M.D."/>
            <person name="Vangronsveld J."/>
            <person name="Newman L."/>
            <person name="Monchy S."/>
        </authorList>
    </citation>
    <scope>NUCLEOTIDE SEQUENCE [LARGE SCALE GENOMIC DNA]</scope>
    <source>
        <strain>638</strain>
    </source>
</reference>
<keyword id="KW-0997">Cell inner membrane</keyword>
<keyword id="KW-1003">Cell membrane</keyword>
<keyword id="KW-0378">Hydrolase</keyword>
<keyword id="KW-0444">Lipid biosynthesis</keyword>
<keyword id="KW-0443">Lipid metabolism</keyword>
<keyword id="KW-0472">Membrane</keyword>
<keyword id="KW-0594">Phospholipid biosynthesis</keyword>
<keyword id="KW-1208">Phospholipid metabolism</keyword>
<keyword id="KW-0812">Transmembrane</keyword>
<keyword id="KW-1133">Transmembrane helix</keyword>
<accession>A4WG79</accession>
<sequence>MKKLIVLALVVSVAVAGGWLWMKSGNPDALRHIVLEQCLVNQQQHRNPAPCAQVKPDAGYVVFKDRNGPLQYLLMPTYRINGTESPLLTEPQTPNFFWLAWQSRNFMSMKRGTEVPDSAIALTINSPTGRTQNHFHIHISCLRPDVREKLDANQGQISTQWLPFPGGLEGHEYLARRVTEAELVKRSPFMMLAQELPQAREHMGRFAMAMAQQSDGSFVLLATERNLLVLNRASAEELQDHQCDILN</sequence>